<gene>
    <name type="primary">Cog1</name>
    <name type="synonym">Ldlb</name>
</gene>
<proteinExistence type="evidence at protein level"/>
<accession>Q9Z160</accession>
<accession>Q6P567</accession>
<protein>
    <recommendedName>
        <fullName>Conserved oligomeric Golgi complex subunit 1</fullName>
        <shortName>COG complex subunit 1</shortName>
    </recommendedName>
    <alternativeName>
        <fullName>Component of oligomeric Golgi complex 1</fullName>
    </alternativeName>
    <alternativeName>
        <fullName>Low density lipoprotein receptor defect B-complementing protein</fullName>
    </alternativeName>
</protein>
<name>COG1_MOUSE</name>
<keyword id="KW-0007">Acetylation</keyword>
<keyword id="KW-0333">Golgi apparatus</keyword>
<keyword id="KW-0472">Membrane</keyword>
<keyword id="KW-0597">Phosphoprotein</keyword>
<keyword id="KW-0653">Protein transport</keyword>
<keyword id="KW-1185">Reference proteome</keyword>
<keyword id="KW-0813">Transport</keyword>
<dbReference type="EMBL" id="AF109377">
    <property type="protein sequence ID" value="AAD13780.2"/>
    <property type="molecule type" value="mRNA"/>
</dbReference>
<dbReference type="EMBL" id="AK034636">
    <property type="protein sequence ID" value="BAE43288.1"/>
    <property type="molecule type" value="mRNA"/>
</dbReference>
<dbReference type="EMBL" id="BC063056">
    <property type="protein sequence ID" value="AAH63056.1"/>
    <property type="molecule type" value="mRNA"/>
</dbReference>
<dbReference type="CCDS" id="CCDS25599.1"/>
<dbReference type="RefSeq" id="NP_038609.3">
    <property type="nucleotide sequence ID" value="NM_013581.3"/>
</dbReference>
<dbReference type="SMR" id="Q9Z160"/>
<dbReference type="BioGRID" id="201132">
    <property type="interactions" value="5"/>
</dbReference>
<dbReference type="FunCoup" id="Q9Z160">
    <property type="interactions" value="3579"/>
</dbReference>
<dbReference type="STRING" id="10090.ENSMUSP00000018805"/>
<dbReference type="GlyGen" id="Q9Z160">
    <property type="glycosylation" value="1 site, 1 O-linked glycan (1 site)"/>
</dbReference>
<dbReference type="iPTMnet" id="Q9Z160"/>
<dbReference type="PhosphoSitePlus" id="Q9Z160"/>
<dbReference type="PaxDb" id="10090-ENSMUSP00000018805"/>
<dbReference type="ProteomicsDB" id="283342"/>
<dbReference type="Pumba" id="Q9Z160"/>
<dbReference type="Antibodypedia" id="31901">
    <property type="antibodies" value="124 antibodies from 27 providers"/>
</dbReference>
<dbReference type="DNASU" id="16834"/>
<dbReference type="Ensembl" id="ENSMUST00000018805.15">
    <property type="protein sequence ID" value="ENSMUSP00000018805.9"/>
    <property type="gene ID" value="ENSMUSG00000018661.18"/>
</dbReference>
<dbReference type="GeneID" id="16834"/>
<dbReference type="KEGG" id="mmu:16834"/>
<dbReference type="UCSC" id="uc007mer.2">
    <property type="organism name" value="mouse"/>
</dbReference>
<dbReference type="AGR" id="MGI:1333873"/>
<dbReference type="CTD" id="9382"/>
<dbReference type="MGI" id="MGI:1333873">
    <property type="gene designation" value="Cog1"/>
</dbReference>
<dbReference type="VEuPathDB" id="HostDB:ENSMUSG00000018661"/>
<dbReference type="eggNOG" id="KOG2033">
    <property type="taxonomic scope" value="Eukaryota"/>
</dbReference>
<dbReference type="GeneTree" id="ENSGT00390000017136"/>
<dbReference type="HOGENOM" id="CLU_012605_0_0_1"/>
<dbReference type="InParanoid" id="Q9Z160"/>
<dbReference type="OMA" id="DNPRRQT"/>
<dbReference type="OrthoDB" id="46189at2759"/>
<dbReference type="PhylomeDB" id="Q9Z160"/>
<dbReference type="TreeFam" id="TF314678"/>
<dbReference type="Reactome" id="R-MMU-6807878">
    <property type="pathway name" value="COPI-mediated anterograde transport"/>
</dbReference>
<dbReference type="Reactome" id="R-MMU-6811438">
    <property type="pathway name" value="Intra-Golgi traffic"/>
</dbReference>
<dbReference type="Reactome" id="R-MMU-6811440">
    <property type="pathway name" value="Retrograde transport at the Trans-Golgi-Network"/>
</dbReference>
<dbReference type="BioGRID-ORCS" id="16834">
    <property type="hits" value="24 hits in 78 CRISPR screens"/>
</dbReference>
<dbReference type="ChiTaRS" id="Cog1">
    <property type="organism name" value="mouse"/>
</dbReference>
<dbReference type="PRO" id="PR:Q9Z160"/>
<dbReference type="Proteomes" id="UP000000589">
    <property type="component" value="Chromosome 11"/>
</dbReference>
<dbReference type="RNAct" id="Q9Z160">
    <property type="molecule type" value="protein"/>
</dbReference>
<dbReference type="Bgee" id="ENSMUSG00000018661">
    <property type="expression patterns" value="Expressed in external carotid artery and 249 other cell types or tissues"/>
</dbReference>
<dbReference type="ExpressionAtlas" id="Q9Z160">
    <property type="expression patterns" value="baseline and differential"/>
</dbReference>
<dbReference type="GO" id="GO:0000139">
    <property type="term" value="C:Golgi membrane"/>
    <property type="evidence" value="ECO:0007669"/>
    <property type="project" value="UniProtKB-SubCell"/>
</dbReference>
<dbReference type="GO" id="GO:0017119">
    <property type="term" value="C:Golgi transport complex"/>
    <property type="evidence" value="ECO:0007669"/>
    <property type="project" value="Ensembl"/>
</dbReference>
<dbReference type="GO" id="GO:0070085">
    <property type="term" value="P:glycosylation"/>
    <property type="evidence" value="ECO:0007669"/>
    <property type="project" value="Ensembl"/>
</dbReference>
<dbReference type="GO" id="GO:0007030">
    <property type="term" value="P:Golgi organization"/>
    <property type="evidence" value="ECO:0007669"/>
    <property type="project" value="Ensembl"/>
</dbReference>
<dbReference type="GO" id="GO:0015031">
    <property type="term" value="P:protein transport"/>
    <property type="evidence" value="ECO:0007669"/>
    <property type="project" value="UniProtKB-KW"/>
</dbReference>
<dbReference type="GO" id="GO:0000301">
    <property type="term" value="P:retrograde transport, vesicle recycling within Golgi"/>
    <property type="evidence" value="ECO:0007669"/>
    <property type="project" value="Ensembl"/>
</dbReference>
<dbReference type="InterPro" id="IPR033370">
    <property type="entry name" value="COG1"/>
</dbReference>
<dbReference type="PANTHER" id="PTHR31658">
    <property type="entry name" value="CONSERVED OLIGOMERIC GOLGI COMPLEX SUBUNIT 1"/>
    <property type="match status" value="1"/>
</dbReference>
<dbReference type="PANTHER" id="PTHR31658:SF0">
    <property type="entry name" value="CONSERVED OLIGOMERIC GOLGI COMPLEX SUBUNIT 1"/>
    <property type="match status" value="1"/>
</dbReference>
<dbReference type="Pfam" id="PF08700">
    <property type="entry name" value="VPS51_Exo84_N"/>
    <property type="match status" value="1"/>
</dbReference>
<sequence>MAAATASSALKRLDLRDPNALFETHGAEEIRGLERQVRAEIEHKKEELRQMVGERYRDLIEAADTIGQMRRCAEGLVDAVQATDQYCARLRQAGSVAPRVPRAPQPQPPSEKFYSMAAQIKLLLEIPEKIWSAMEASQHLQATQLYLLCCHLHSLLQLDSSNSRYSPILSRFPILIRQVAAASHFRSTILHESKMLLKCQAVSDQAVAEALCSIMLLEESSPRQALTDFLLARKATIQTLLNQSHHGAGIKAQICSLVELLATTLNQAHALFYTLPEGVLPDPSLPCGLLFSTLETVTRQHPTGKGIGALQGEMKLCSWFRHLPTSIIEFQPTLRTLAHPISQEYLKDTLQKWIDMCNEDIKNGIGNLLMYVKSMKGLAGIRDAIWDLLSNESASHSWEVVCQRLLEKPLLFWEDLMQQLFLDRLQTLTREGFESISNSSKELLVSALQELETNNSTSNKHVHFEQNMSFFLWSESPNDLPSDAAWVSVANRAQFASSGLSMKAQAISPCVQNFCSALDSKLKVKLDDLLAYLPSSDTPLLKDTTPTHQPKNSAFDRYADAGTVQDMLRTQSVACIKSVVGCIQAELCTIEEVTREQKDVLHSTKLHAVLFMARLCQSLGELCPHLKQCVVGQCGGSEKPAREARALKKQGKGRAQDVLPAQAQWQGVKEVLLQQSVMAYRVWSTALVKFLICGFTRSLLLRDAGSVLATATNWDELEIQEETESGSSVTSKIRLPTQPSWYVQSFLFSLCQEVNRVGGHALPKVTLQEMLKTCMAQVIAAYEQLTEENQIKKEGAFPMTQNRALQLLYDLRYLTMVLSSKGEEVKSGRSKADSRMEKMTERLEALIDPFDLDVFTPHLNSNLNRLVQRTSVLFGLVTGTENQFASRSSTFNSQEPHNILPLASSQIRFGLLPLSMTSTRKARATSRSVETQAQVGPPALSRVGDPTTHPGSLFRQLASEEDDSPAPSLFKLAWLSSMTK</sequence>
<organism>
    <name type="scientific">Mus musculus</name>
    <name type="common">Mouse</name>
    <dbReference type="NCBI Taxonomy" id="10090"/>
    <lineage>
        <taxon>Eukaryota</taxon>
        <taxon>Metazoa</taxon>
        <taxon>Chordata</taxon>
        <taxon>Craniata</taxon>
        <taxon>Vertebrata</taxon>
        <taxon>Euteleostomi</taxon>
        <taxon>Mammalia</taxon>
        <taxon>Eutheria</taxon>
        <taxon>Euarchontoglires</taxon>
        <taxon>Glires</taxon>
        <taxon>Rodentia</taxon>
        <taxon>Myomorpha</taxon>
        <taxon>Muroidea</taxon>
        <taxon>Muridae</taxon>
        <taxon>Murinae</taxon>
        <taxon>Mus</taxon>
        <taxon>Mus</taxon>
    </lineage>
</organism>
<feature type="initiator methionine" description="Removed" evidence="2">
    <location>
        <position position="1"/>
    </location>
</feature>
<feature type="chain" id="PRO_0000213492" description="Conserved oligomeric Golgi complex subunit 1">
    <location>
        <begin position="2"/>
        <end position="980"/>
    </location>
</feature>
<feature type="region of interest" description="Disordered" evidence="3">
    <location>
        <begin position="923"/>
        <end position="950"/>
    </location>
</feature>
<feature type="compositionally biased region" description="Polar residues" evidence="3">
    <location>
        <begin position="923"/>
        <end position="934"/>
    </location>
</feature>
<feature type="modified residue" description="N-acetylalanine" evidence="2">
    <location>
        <position position="2"/>
    </location>
</feature>
<feature type="modified residue" description="Phosphoserine" evidence="2">
    <location>
        <position position="7"/>
    </location>
</feature>
<feature type="modified residue" description="N6-acetyllysine" evidence="5">
    <location>
        <position position="598"/>
    </location>
</feature>
<feature type="sequence conflict" description="In Ref. 1; AAD13780." evidence="4" ref="1">
    <original>F</original>
    <variation>L</variation>
    <location>
        <position position="320"/>
    </location>
</feature>
<feature type="sequence conflict" description="In Ref. 1; AAD13780." evidence="4" ref="1">
    <original>A</original>
    <variation>T</variation>
    <location>
        <position position="561"/>
    </location>
</feature>
<feature type="sequence conflict" description="In Ref. 1; AAD13780." evidence="4" ref="1">
    <original>V</original>
    <variation>I</variation>
    <location>
        <position position="630"/>
    </location>
</feature>
<feature type="sequence conflict" description="In Ref. 1; AAD13780." evidence="4" ref="1">
    <original>E</original>
    <variation>G</variation>
    <location>
        <position position="722"/>
    </location>
</feature>
<feature type="sequence conflict" description="In Ref. 1; AAD13780." evidence="4" ref="1">
    <original>K</original>
    <variation>E</variation>
    <location>
        <position position="772"/>
    </location>
</feature>
<evidence type="ECO:0000250" key="1"/>
<evidence type="ECO:0000250" key="2">
    <source>
        <dbReference type="UniProtKB" id="Q8WTW3"/>
    </source>
</evidence>
<evidence type="ECO:0000256" key="3">
    <source>
        <dbReference type="SAM" id="MobiDB-lite"/>
    </source>
</evidence>
<evidence type="ECO:0000305" key="4"/>
<evidence type="ECO:0007744" key="5">
    <source>
    </source>
</evidence>
<reference key="1">
    <citation type="journal article" date="1999" name="Proc. Natl. Acad. Sci. U.S.A.">
        <title>Expression cloning of LDLB, a gene essential for normal Golgi function and assembly of the ldlCp complex.</title>
        <authorList>
            <person name="Chatterton J.E."/>
            <person name="Hirsch D."/>
            <person name="Schwartz J.J."/>
            <person name="Bickel P.E."/>
            <person name="Rosenberg R.D."/>
            <person name="Lodish H.F."/>
            <person name="Krieger M."/>
        </authorList>
    </citation>
    <scope>NUCLEOTIDE SEQUENCE [MRNA]</scope>
    <source>
        <strain>BALB/cJ</strain>
    </source>
</reference>
<reference key="2">
    <citation type="submission" date="2001-06" db="EMBL/GenBank/DDBJ databases">
        <authorList>
            <person name="Oka T."/>
            <person name="Chatterton J.E."/>
            <person name="Krieger M."/>
        </authorList>
    </citation>
    <scope>SEQUENCE REVISION</scope>
</reference>
<reference key="3">
    <citation type="journal article" date="2005" name="Science">
        <title>The transcriptional landscape of the mammalian genome.</title>
        <authorList>
            <person name="Carninci P."/>
            <person name="Kasukawa T."/>
            <person name="Katayama S."/>
            <person name="Gough J."/>
            <person name="Frith M.C."/>
            <person name="Maeda N."/>
            <person name="Oyama R."/>
            <person name="Ravasi T."/>
            <person name="Lenhard B."/>
            <person name="Wells C."/>
            <person name="Kodzius R."/>
            <person name="Shimokawa K."/>
            <person name="Bajic V.B."/>
            <person name="Brenner S.E."/>
            <person name="Batalov S."/>
            <person name="Forrest A.R."/>
            <person name="Zavolan M."/>
            <person name="Davis M.J."/>
            <person name="Wilming L.G."/>
            <person name="Aidinis V."/>
            <person name="Allen J.E."/>
            <person name="Ambesi-Impiombato A."/>
            <person name="Apweiler R."/>
            <person name="Aturaliya R.N."/>
            <person name="Bailey T.L."/>
            <person name="Bansal M."/>
            <person name="Baxter L."/>
            <person name="Beisel K.W."/>
            <person name="Bersano T."/>
            <person name="Bono H."/>
            <person name="Chalk A.M."/>
            <person name="Chiu K.P."/>
            <person name="Choudhary V."/>
            <person name="Christoffels A."/>
            <person name="Clutterbuck D.R."/>
            <person name="Crowe M.L."/>
            <person name="Dalla E."/>
            <person name="Dalrymple B.P."/>
            <person name="de Bono B."/>
            <person name="Della Gatta G."/>
            <person name="di Bernardo D."/>
            <person name="Down T."/>
            <person name="Engstrom P."/>
            <person name="Fagiolini M."/>
            <person name="Faulkner G."/>
            <person name="Fletcher C.F."/>
            <person name="Fukushima T."/>
            <person name="Furuno M."/>
            <person name="Futaki S."/>
            <person name="Gariboldi M."/>
            <person name="Georgii-Hemming P."/>
            <person name="Gingeras T.R."/>
            <person name="Gojobori T."/>
            <person name="Green R.E."/>
            <person name="Gustincich S."/>
            <person name="Harbers M."/>
            <person name="Hayashi Y."/>
            <person name="Hensch T.K."/>
            <person name="Hirokawa N."/>
            <person name="Hill D."/>
            <person name="Huminiecki L."/>
            <person name="Iacono M."/>
            <person name="Ikeo K."/>
            <person name="Iwama A."/>
            <person name="Ishikawa T."/>
            <person name="Jakt M."/>
            <person name="Kanapin A."/>
            <person name="Katoh M."/>
            <person name="Kawasawa Y."/>
            <person name="Kelso J."/>
            <person name="Kitamura H."/>
            <person name="Kitano H."/>
            <person name="Kollias G."/>
            <person name="Krishnan S.P."/>
            <person name="Kruger A."/>
            <person name="Kummerfeld S.K."/>
            <person name="Kurochkin I.V."/>
            <person name="Lareau L.F."/>
            <person name="Lazarevic D."/>
            <person name="Lipovich L."/>
            <person name="Liu J."/>
            <person name="Liuni S."/>
            <person name="McWilliam S."/>
            <person name="Madan Babu M."/>
            <person name="Madera M."/>
            <person name="Marchionni L."/>
            <person name="Matsuda H."/>
            <person name="Matsuzawa S."/>
            <person name="Miki H."/>
            <person name="Mignone F."/>
            <person name="Miyake S."/>
            <person name="Morris K."/>
            <person name="Mottagui-Tabar S."/>
            <person name="Mulder N."/>
            <person name="Nakano N."/>
            <person name="Nakauchi H."/>
            <person name="Ng P."/>
            <person name="Nilsson R."/>
            <person name="Nishiguchi S."/>
            <person name="Nishikawa S."/>
            <person name="Nori F."/>
            <person name="Ohara O."/>
            <person name="Okazaki Y."/>
            <person name="Orlando V."/>
            <person name="Pang K.C."/>
            <person name="Pavan W.J."/>
            <person name="Pavesi G."/>
            <person name="Pesole G."/>
            <person name="Petrovsky N."/>
            <person name="Piazza S."/>
            <person name="Reed J."/>
            <person name="Reid J.F."/>
            <person name="Ring B.Z."/>
            <person name="Ringwald M."/>
            <person name="Rost B."/>
            <person name="Ruan Y."/>
            <person name="Salzberg S.L."/>
            <person name="Sandelin A."/>
            <person name="Schneider C."/>
            <person name="Schoenbach C."/>
            <person name="Sekiguchi K."/>
            <person name="Semple C.A."/>
            <person name="Seno S."/>
            <person name="Sessa L."/>
            <person name="Sheng Y."/>
            <person name="Shibata Y."/>
            <person name="Shimada H."/>
            <person name="Shimada K."/>
            <person name="Silva D."/>
            <person name="Sinclair B."/>
            <person name="Sperling S."/>
            <person name="Stupka E."/>
            <person name="Sugiura K."/>
            <person name="Sultana R."/>
            <person name="Takenaka Y."/>
            <person name="Taki K."/>
            <person name="Tammoja K."/>
            <person name="Tan S.L."/>
            <person name="Tang S."/>
            <person name="Taylor M.S."/>
            <person name="Tegner J."/>
            <person name="Teichmann S.A."/>
            <person name="Ueda H.R."/>
            <person name="van Nimwegen E."/>
            <person name="Verardo R."/>
            <person name="Wei C.L."/>
            <person name="Yagi K."/>
            <person name="Yamanishi H."/>
            <person name="Zabarovsky E."/>
            <person name="Zhu S."/>
            <person name="Zimmer A."/>
            <person name="Hide W."/>
            <person name="Bult C."/>
            <person name="Grimmond S.M."/>
            <person name="Teasdale R.D."/>
            <person name="Liu E.T."/>
            <person name="Brusic V."/>
            <person name="Quackenbush J."/>
            <person name="Wahlestedt C."/>
            <person name="Mattick J.S."/>
            <person name="Hume D.A."/>
            <person name="Kai C."/>
            <person name="Sasaki D."/>
            <person name="Tomaru Y."/>
            <person name="Fukuda S."/>
            <person name="Kanamori-Katayama M."/>
            <person name="Suzuki M."/>
            <person name="Aoki J."/>
            <person name="Arakawa T."/>
            <person name="Iida J."/>
            <person name="Imamura K."/>
            <person name="Itoh M."/>
            <person name="Kato T."/>
            <person name="Kawaji H."/>
            <person name="Kawagashira N."/>
            <person name="Kawashima T."/>
            <person name="Kojima M."/>
            <person name="Kondo S."/>
            <person name="Konno H."/>
            <person name="Nakano K."/>
            <person name="Ninomiya N."/>
            <person name="Nishio T."/>
            <person name="Okada M."/>
            <person name="Plessy C."/>
            <person name="Shibata K."/>
            <person name="Shiraki T."/>
            <person name="Suzuki S."/>
            <person name="Tagami M."/>
            <person name="Waki K."/>
            <person name="Watahiki A."/>
            <person name="Okamura-Oho Y."/>
            <person name="Suzuki H."/>
            <person name="Kawai J."/>
            <person name="Hayashizaki Y."/>
        </authorList>
    </citation>
    <scope>NUCLEOTIDE SEQUENCE [LARGE SCALE MRNA]</scope>
    <source>
        <strain>C57BL/6J</strain>
        <tissue>Embryo</tissue>
    </source>
</reference>
<reference key="4">
    <citation type="journal article" date="2004" name="Genome Res.">
        <title>The status, quality, and expansion of the NIH full-length cDNA project: the Mammalian Gene Collection (MGC).</title>
        <authorList>
            <consortium name="The MGC Project Team"/>
        </authorList>
    </citation>
    <scope>NUCLEOTIDE SEQUENCE [LARGE SCALE MRNA]</scope>
    <source>
        <strain>C57BL/6J</strain>
        <tissue>Brain</tissue>
    </source>
</reference>
<reference key="5">
    <citation type="journal article" date="2010" name="Cell">
        <title>A tissue-specific atlas of mouse protein phosphorylation and expression.</title>
        <authorList>
            <person name="Huttlin E.L."/>
            <person name="Jedrychowski M.P."/>
            <person name="Elias J.E."/>
            <person name="Goswami T."/>
            <person name="Rad R."/>
            <person name="Beausoleil S.A."/>
            <person name="Villen J."/>
            <person name="Haas W."/>
            <person name="Sowa M.E."/>
            <person name="Gygi S.P."/>
        </authorList>
    </citation>
    <scope>IDENTIFICATION BY MASS SPECTROMETRY [LARGE SCALE ANALYSIS]</scope>
    <source>
        <tissue>Brain</tissue>
        <tissue>Kidney</tissue>
        <tissue>Liver</tissue>
        <tissue>Lung</tissue>
        <tissue>Pancreas</tissue>
        <tissue>Spleen</tissue>
        <tissue>Testis</tissue>
    </source>
</reference>
<reference key="6">
    <citation type="journal article" date="2013" name="Mol. Cell">
        <title>SIRT5-mediated lysine desuccinylation impacts diverse metabolic pathways.</title>
        <authorList>
            <person name="Park J."/>
            <person name="Chen Y."/>
            <person name="Tishkoff D.X."/>
            <person name="Peng C."/>
            <person name="Tan M."/>
            <person name="Dai L."/>
            <person name="Xie Z."/>
            <person name="Zhang Y."/>
            <person name="Zwaans B.M."/>
            <person name="Skinner M.E."/>
            <person name="Lombard D.B."/>
            <person name="Zhao Y."/>
        </authorList>
    </citation>
    <scope>ACETYLATION [LARGE SCALE ANALYSIS] AT LYS-598</scope>
    <scope>IDENTIFICATION BY MASS SPECTROMETRY [LARGE SCALE ANALYSIS]</scope>
    <source>
        <tissue>Embryonic fibroblast</tissue>
    </source>
</reference>
<comment type="function">
    <text>Required for normal Golgi function.</text>
</comment>
<comment type="subunit">
    <text evidence="1">Component of the conserved oligomeric Golgi complex which is composed of eight different subunits and is required for normal Golgi morphology and localization.</text>
</comment>
<comment type="subcellular location">
    <subcellularLocation>
        <location evidence="1">Golgi apparatus membrane</location>
        <topology evidence="1">Peripheral membrane protein</topology>
        <orientation evidence="1">Cytoplasmic side</orientation>
    </subcellularLocation>
</comment>
<comment type="similarity">
    <text evidence="4">Belongs to the COG1 family.</text>
</comment>